<sequence length="745" mass="85062">MMTQAQTYFYDGSDVALLNGQYTDVFSLLGMHCINEGKALVVRCFLRNAQKVDVISLKDGRKVASLERVNEAGLFAGTLGRRVKPFLYALRVVYPLCELDIIDPYQFGSLLDSQDLYLFGEGGSEQAYRFLGANWRQVDSVEGVHFCVWAPNAKRVSVVGDFNHWDDTRHVMRQHMANGLWEIFLPDVAEGAHYKFDLVYQNGERHAKSDPMATQMECAPNNASIVPKKHQHPWADTQWMDKRATTAWHRAAMSIYEVQLGSWRRKGEFGEQYFDYQDLIEQLIPYVKEQGFTHIELMPVSEYPFDGSWGYQPVGLYAPTHRFGDANGLKAFIDACHQAEIGVLLDWVAAHFPKDPHGLVRFDGTCLYEHEDPRKGTHPDWDTLIYNYDRGEVRSFLLSNACYWLREFHLDGLRLDAVSSMLYLDYSREPGQWLPNAYGGRENLEAIHFLQMLNQRLYQAFPGICMIAEESTAFAGVTKPTDCGGLGFGFKWNMGWMNDSLSYLGRDPIYRQYHHNQLTFSLMYAYSEQFMLSISHDEVVHGKGSLLHKIPGDDWQKFATLRAYYGFMWGHPGKKLLFMGSEFAQRDEWNHNHSLDWHLLAFEPHQGVQRWLRDLNQLYRQFPALSVLDYESQGFRWLDCDNGRDSIFSFVRYGEGSDVPLVFVVNMTPTLHQGFRIGLPQGGDFCEYLNSDSHLYGGSNQGNAGKVIAEDLPWQGMASSALITVPPLGCLILGPATDAPRDTSL</sequence>
<protein>
    <recommendedName>
        <fullName evidence="1">1,4-alpha-glucan branching enzyme GlgB</fullName>
        <ecNumber evidence="1">2.4.1.18</ecNumber>
    </recommendedName>
    <alternativeName>
        <fullName evidence="1">1,4-alpha-D-glucan:1,4-alpha-D-glucan 6-glucosyl-transferase</fullName>
    </alternativeName>
    <alternativeName>
        <fullName evidence="1">Alpha-(1-&gt;4)-glucan branching enzyme</fullName>
    </alternativeName>
    <alternativeName>
        <fullName evidence="1">Glycogen branching enzyme</fullName>
        <shortName evidence="1">BE</shortName>
    </alternativeName>
</protein>
<accession>Q0HST5</accession>
<name>GLGB_SHESR</name>
<evidence type="ECO:0000255" key="1">
    <source>
        <dbReference type="HAMAP-Rule" id="MF_00685"/>
    </source>
</evidence>
<reference key="1">
    <citation type="submission" date="2006-08" db="EMBL/GenBank/DDBJ databases">
        <title>Complete sequence of chromosome 1 of Shewanella sp. MR-7.</title>
        <authorList>
            <person name="Copeland A."/>
            <person name="Lucas S."/>
            <person name="Lapidus A."/>
            <person name="Barry K."/>
            <person name="Detter J.C."/>
            <person name="Glavina del Rio T."/>
            <person name="Hammon N."/>
            <person name="Israni S."/>
            <person name="Dalin E."/>
            <person name="Tice H."/>
            <person name="Pitluck S."/>
            <person name="Kiss H."/>
            <person name="Brettin T."/>
            <person name="Bruce D."/>
            <person name="Han C."/>
            <person name="Tapia R."/>
            <person name="Gilna P."/>
            <person name="Schmutz J."/>
            <person name="Larimer F."/>
            <person name="Land M."/>
            <person name="Hauser L."/>
            <person name="Kyrpides N."/>
            <person name="Mikhailova N."/>
            <person name="Nealson K."/>
            <person name="Konstantinidis K."/>
            <person name="Klappenbach J."/>
            <person name="Tiedje J."/>
            <person name="Richardson P."/>
        </authorList>
    </citation>
    <scope>NUCLEOTIDE SEQUENCE [LARGE SCALE GENOMIC DNA]</scope>
    <source>
        <strain>MR-7</strain>
    </source>
</reference>
<feature type="chain" id="PRO_0000260700" description="1,4-alpha-glucan branching enzyme GlgB">
    <location>
        <begin position="1"/>
        <end position="745"/>
    </location>
</feature>
<feature type="active site" description="Nucleophile" evidence="1">
    <location>
        <position position="416"/>
    </location>
</feature>
<feature type="active site" description="Proton donor" evidence="1">
    <location>
        <position position="469"/>
    </location>
</feature>
<comment type="function">
    <text evidence="1">Catalyzes the formation of the alpha-1,6-glucosidic linkages in glycogen by scission of a 1,4-alpha-linked oligosaccharide from growing alpha-1,4-glucan chains and the subsequent attachment of the oligosaccharide to the alpha-1,6 position.</text>
</comment>
<comment type="catalytic activity">
    <reaction evidence="1">
        <text>Transfers a segment of a (1-&gt;4)-alpha-D-glucan chain to a primary hydroxy group in a similar glucan chain.</text>
        <dbReference type="EC" id="2.4.1.18"/>
    </reaction>
</comment>
<comment type="pathway">
    <text evidence="1">Glycan biosynthesis; glycogen biosynthesis.</text>
</comment>
<comment type="subunit">
    <text evidence="1">Monomer.</text>
</comment>
<comment type="similarity">
    <text evidence="1">Belongs to the glycosyl hydrolase 13 family. GlgB subfamily.</text>
</comment>
<organism>
    <name type="scientific">Shewanella sp. (strain MR-7)</name>
    <dbReference type="NCBI Taxonomy" id="60481"/>
    <lineage>
        <taxon>Bacteria</taxon>
        <taxon>Pseudomonadati</taxon>
        <taxon>Pseudomonadota</taxon>
        <taxon>Gammaproteobacteria</taxon>
        <taxon>Alteromonadales</taxon>
        <taxon>Shewanellaceae</taxon>
        <taxon>Shewanella</taxon>
    </lineage>
</organism>
<keyword id="KW-0119">Carbohydrate metabolism</keyword>
<keyword id="KW-0320">Glycogen biosynthesis</keyword>
<keyword id="KW-0321">Glycogen metabolism</keyword>
<keyword id="KW-0328">Glycosyltransferase</keyword>
<keyword id="KW-0808">Transferase</keyword>
<dbReference type="EC" id="2.4.1.18" evidence="1"/>
<dbReference type="EMBL" id="CP000444">
    <property type="protein sequence ID" value="ABI43820.1"/>
    <property type="molecule type" value="Genomic_DNA"/>
</dbReference>
<dbReference type="SMR" id="Q0HST5"/>
<dbReference type="CAZy" id="CBM48">
    <property type="family name" value="Carbohydrate-Binding Module Family 48"/>
</dbReference>
<dbReference type="CAZy" id="GH13">
    <property type="family name" value="Glycoside Hydrolase Family 13"/>
</dbReference>
<dbReference type="KEGG" id="shm:Shewmr7_2836"/>
<dbReference type="HOGENOM" id="CLU_004245_3_2_6"/>
<dbReference type="UniPathway" id="UPA00164"/>
<dbReference type="GO" id="GO:0005829">
    <property type="term" value="C:cytosol"/>
    <property type="evidence" value="ECO:0007669"/>
    <property type="project" value="TreeGrafter"/>
</dbReference>
<dbReference type="GO" id="GO:0003844">
    <property type="term" value="F:1,4-alpha-glucan branching enzyme activity"/>
    <property type="evidence" value="ECO:0007669"/>
    <property type="project" value="UniProtKB-UniRule"/>
</dbReference>
<dbReference type="GO" id="GO:0043169">
    <property type="term" value="F:cation binding"/>
    <property type="evidence" value="ECO:0007669"/>
    <property type="project" value="InterPro"/>
</dbReference>
<dbReference type="GO" id="GO:0004553">
    <property type="term" value="F:hydrolase activity, hydrolyzing O-glycosyl compounds"/>
    <property type="evidence" value="ECO:0007669"/>
    <property type="project" value="InterPro"/>
</dbReference>
<dbReference type="GO" id="GO:0005978">
    <property type="term" value="P:glycogen biosynthetic process"/>
    <property type="evidence" value="ECO:0007669"/>
    <property type="project" value="UniProtKB-UniRule"/>
</dbReference>
<dbReference type="CDD" id="cd11322">
    <property type="entry name" value="AmyAc_Glg_BE"/>
    <property type="match status" value="1"/>
</dbReference>
<dbReference type="CDD" id="cd02855">
    <property type="entry name" value="E_set_GBE_prok_N"/>
    <property type="match status" value="1"/>
</dbReference>
<dbReference type="FunFam" id="2.60.40.10:FF:000169">
    <property type="entry name" value="1,4-alpha-glucan branching enzyme GlgB"/>
    <property type="match status" value="1"/>
</dbReference>
<dbReference type="FunFam" id="2.60.40.1180:FF:000002">
    <property type="entry name" value="1,4-alpha-glucan branching enzyme GlgB"/>
    <property type="match status" value="1"/>
</dbReference>
<dbReference type="FunFam" id="3.20.20.80:FF:000003">
    <property type="entry name" value="1,4-alpha-glucan branching enzyme GlgB"/>
    <property type="match status" value="1"/>
</dbReference>
<dbReference type="Gene3D" id="3.20.20.80">
    <property type="entry name" value="Glycosidases"/>
    <property type="match status" value="1"/>
</dbReference>
<dbReference type="Gene3D" id="2.60.40.1180">
    <property type="entry name" value="Golgi alpha-mannosidase II"/>
    <property type="match status" value="1"/>
</dbReference>
<dbReference type="Gene3D" id="2.60.40.10">
    <property type="entry name" value="Immunoglobulins"/>
    <property type="match status" value="1"/>
</dbReference>
<dbReference type="HAMAP" id="MF_00685">
    <property type="entry name" value="GlgB"/>
    <property type="match status" value="1"/>
</dbReference>
<dbReference type="InterPro" id="IPR006048">
    <property type="entry name" value="A-amylase/branching_C"/>
</dbReference>
<dbReference type="InterPro" id="IPR037439">
    <property type="entry name" value="Branching_enzy"/>
</dbReference>
<dbReference type="InterPro" id="IPR006407">
    <property type="entry name" value="GlgB"/>
</dbReference>
<dbReference type="InterPro" id="IPR054169">
    <property type="entry name" value="GlgB_N"/>
</dbReference>
<dbReference type="InterPro" id="IPR044143">
    <property type="entry name" value="GlgB_N_E_set_prok"/>
</dbReference>
<dbReference type="InterPro" id="IPR006047">
    <property type="entry name" value="Glyco_hydro_13_cat_dom"/>
</dbReference>
<dbReference type="InterPro" id="IPR004193">
    <property type="entry name" value="Glyco_hydro_13_N"/>
</dbReference>
<dbReference type="InterPro" id="IPR013780">
    <property type="entry name" value="Glyco_hydro_b"/>
</dbReference>
<dbReference type="InterPro" id="IPR017853">
    <property type="entry name" value="Glycoside_hydrolase_SF"/>
</dbReference>
<dbReference type="InterPro" id="IPR013783">
    <property type="entry name" value="Ig-like_fold"/>
</dbReference>
<dbReference type="InterPro" id="IPR014756">
    <property type="entry name" value="Ig_E-set"/>
</dbReference>
<dbReference type="NCBIfam" id="TIGR01515">
    <property type="entry name" value="branching_enzym"/>
    <property type="match status" value="1"/>
</dbReference>
<dbReference type="NCBIfam" id="NF003811">
    <property type="entry name" value="PRK05402.1"/>
    <property type="match status" value="1"/>
</dbReference>
<dbReference type="NCBIfam" id="NF008967">
    <property type="entry name" value="PRK12313.1"/>
    <property type="match status" value="1"/>
</dbReference>
<dbReference type="PANTHER" id="PTHR43651">
    <property type="entry name" value="1,4-ALPHA-GLUCAN-BRANCHING ENZYME"/>
    <property type="match status" value="1"/>
</dbReference>
<dbReference type="PANTHER" id="PTHR43651:SF3">
    <property type="entry name" value="1,4-ALPHA-GLUCAN-BRANCHING ENZYME"/>
    <property type="match status" value="1"/>
</dbReference>
<dbReference type="Pfam" id="PF00128">
    <property type="entry name" value="Alpha-amylase"/>
    <property type="match status" value="1"/>
</dbReference>
<dbReference type="Pfam" id="PF02806">
    <property type="entry name" value="Alpha-amylase_C"/>
    <property type="match status" value="1"/>
</dbReference>
<dbReference type="Pfam" id="PF02922">
    <property type="entry name" value="CBM_48"/>
    <property type="match status" value="1"/>
</dbReference>
<dbReference type="Pfam" id="PF22019">
    <property type="entry name" value="GlgB_N"/>
    <property type="match status" value="1"/>
</dbReference>
<dbReference type="PIRSF" id="PIRSF000463">
    <property type="entry name" value="GlgB"/>
    <property type="match status" value="1"/>
</dbReference>
<dbReference type="SMART" id="SM00642">
    <property type="entry name" value="Aamy"/>
    <property type="match status" value="1"/>
</dbReference>
<dbReference type="SUPFAM" id="SSF51445">
    <property type="entry name" value="(Trans)glycosidases"/>
    <property type="match status" value="1"/>
</dbReference>
<dbReference type="SUPFAM" id="SSF81296">
    <property type="entry name" value="E set domains"/>
    <property type="match status" value="2"/>
</dbReference>
<dbReference type="SUPFAM" id="SSF51011">
    <property type="entry name" value="Glycosyl hydrolase domain"/>
    <property type="match status" value="1"/>
</dbReference>
<gene>
    <name evidence="1" type="primary">glgB</name>
    <name type="ordered locus">Shewmr7_2836</name>
</gene>
<proteinExistence type="inferred from homology"/>